<evidence type="ECO:0000255" key="1">
    <source>
        <dbReference type="HAMAP-Rule" id="MF_01682"/>
    </source>
</evidence>
<organism>
    <name type="scientific">Yersinia pseudotuberculosis serotype I (strain IP32953)</name>
    <dbReference type="NCBI Taxonomy" id="273123"/>
    <lineage>
        <taxon>Bacteria</taxon>
        <taxon>Pseudomonadati</taxon>
        <taxon>Pseudomonadota</taxon>
        <taxon>Gammaproteobacteria</taxon>
        <taxon>Enterobacterales</taxon>
        <taxon>Yersiniaceae</taxon>
        <taxon>Yersinia</taxon>
    </lineage>
</organism>
<protein>
    <recommendedName>
        <fullName evidence="1">Acireductone dioxygenase</fullName>
    </recommendedName>
    <alternativeName>
        <fullName evidence="1">1,2-dihydroxy-3-keto-5-methylthiopentene dioxygenase</fullName>
        <shortName evidence="1">DHK-MTPene dioxygenase</shortName>
    </alternativeName>
    <alternativeName>
        <fullName evidence="1">Acireductone dioxygenase (Fe(2+)-requiring)</fullName>
        <shortName evidence="1">ARD'</shortName>
        <shortName evidence="1">Fe-ARD</shortName>
        <ecNumber evidence="1">1.13.11.54</ecNumber>
    </alternativeName>
    <alternativeName>
        <fullName evidence="1">Acireductone dioxygenase (Ni(2+)-requiring)</fullName>
        <shortName evidence="1">ARD</shortName>
        <shortName evidence="1">Ni-ARD</shortName>
        <ecNumber evidence="1">1.13.11.53</ecNumber>
    </alternativeName>
</protein>
<reference key="1">
    <citation type="journal article" date="2004" name="Proc. Natl. Acad. Sci. U.S.A.">
        <title>Insights into the evolution of Yersinia pestis through whole-genome comparison with Yersinia pseudotuberculosis.</title>
        <authorList>
            <person name="Chain P.S.G."/>
            <person name="Carniel E."/>
            <person name="Larimer F.W."/>
            <person name="Lamerdin J."/>
            <person name="Stoutland P.O."/>
            <person name="Regala W.M."/>
            <person name="Georgescu A.M."/>
            <person name="Vergez L.M."/>
            <person name="Land M.L."/>
            <person name="Motin V.L."/>
            <person name="Brubaker R.R."/>
            <person name="Fowler J."/>
            <person name="Hinnebusch J."/>
            <person name="Marceau M."/>
            <person name="Medigue C."/>
            <person name="Simonet M."/>
            <person name="Chenal-Francisque V."/>
            <person name="Souza B."/>
            <person name="Dacheux D."/>
            <person name="Elliott J.M."/>
            <person name="Derbise A."/>
            <person name="Hauser L.J."/>
            <person name="Garcia E."/>
        </authorList>
    </citation>
    <scope>NUCLEOTIDE SEQUENCE [LARGE SCALE GENOMIC DNA]</scope>
    <source>
        <strain>IP32953</strain>
    </source>
</reference>
<sequence length="180" mass="20585">MSGLTIFSDQQPEKPLWQSHNAEEIQQQLTAIGVRFERWQADCELGENPQPEAVIAAYQHEIDRLVAENGYKSWDVISMRPDNPQREALREKFLSEHTHGEDEVRFFVEGSGLFCLHLNEKVYQILCEKNDLLSVPADIPHWFDMGSAPNFTAIRVFDNPEGWIARSTGDNIADGYPRLA</sequence>
<dbReference type="EC" id="1.13.11.54" evidence="1"/>
<dbReference type="EC" id="1.13.11.53" evidence="1"/>
<dbReference type="EMBL" id="BX936398">
    <property type="protein sequence ID" value="CAH20116.1"/>
    <property type="molecule type" value="Genomic_DNA"/>
</dbReference>
<dbReference type="RefSeq" id="WP_011191833.1">
    <property type="nucleotide sequence ID" value="NZ_CP009712.1"/>
</dbReference>
<dbReference type="SMR" id="Q66E17"/>
<dbReference type="KEGG" id="ypo:BZ17_1670"/>
<dbReference type="KEGG" id="yps:YPTB0876"/>
<dbReference type="PATRIC" id="fig|273123.14.peg.1778"/>
<dbReference type="UniPathway" id="UPA00904">
    <property type="reaction ID" value="UER00878"/>
</dbReference>
<dbReference type="Proteomes" id="UP000001011">
    <property type="component" value="Chromosome"/>
</dbReference>
<dbReference type="GO" id="GO:0010308">
    <property type="term" value="F:acireductone dioxygenase (Ni2+-requiring) activity"/>
    <property type="evidence" value="ECO:0007669"/>
    <property type="project" value="UniProtKB-UniRule"/>
</dbReference>
<dbReference type="GO" id="GO:0010309">
    <property type="term" value="F:acireductone dioxygenase [iron(II)-requiring] activity"/>
    <property type="evidence" value="ECO:0007669"/>
    <property type="project" value="UniProtKB-UniRule"/>
</dbReference>
<dbReference type="GO" id="GO:0005506">
    <property type="term" value="F:iron ion binding"/>
    <property type="evidence" value="ECO:0007669"/>
    <property type="project" value="UniProtKB-UniRule"/>
</dbReference>
<dbReference type="GO" id="GO:0016151">
    <property type="term" value="F:nickel cation binding"/>
    <property type="evidence" value="ECO:0007669"/>
    <property type="project" value="UniProtKB-UniRule"/>
</dbReference>
<dbReference type="GO" id="GO:0019509">
    <property type="term" value="P:L-methionine salvage from methylthioadenosine"/>
    <property type="evidence" value="ECO:0007669"/>
    <property type="project" value="UniProtKB-UniRule"/>
</dbReference>
<dbReference type="GO" id="GO:0019284">
    <property type="term" value="P:L-methionine salvage from S-adenosylmethionine"/>
    <property type="evidence" value="ECO:0007669"/>
    <property type="project" value="InterPro"/>
</dbReference>
<dbReference type="CDD" id="cd02232">
    <property type="entry name" value="cupin_ARD"/>
    <property type="match status" value="1"/>
</dbReference>
<dbReference type="Gene3D" id="2.60.120.10">
    <property type="entry name" value="Jelly Rolls"/>
    <property type="match status" value="1"/>
</dbReference>
<dbReference type="HAMAP" id="MF_01682">
    <property type="entry name" value="Salvage_MtnD"/>
    <property type="match status" value="1"/>
</dbReference>
<dbReference type="InterPro" id="IPR004313">
    <property type="entry name" value="ARD"/>
</dbReference>
<dbReference type="InterPro" id="IPR023956">
    <property type="entry name" value="ARD_bac"/>
</dbReference>
<dbReference type="InterPro" id="IPR014710">
    <property type="entry name" value="RmlC-like_jellyroll"/>
</dbReference>
<dbReference type="InterPro" id="IPR011051">
    <property type="entry name" value="RmlC_Cupin_sf"/>
</dbReference>
<dbReference type="PANTHER" id="PTHR23418">
    <property type="entry name" value="ACIREDUCTONE DIOXYGENASE"/>
    <property type="match status" value="1"/>
</dbReference>
<dbReference type="PANTHER" id="PTHR23418:SF0">
    <property type="entry name" value="ACIREDUCTONE DIOXYGENASE"/>
    <property type="match status" value="1"/>
</dbReference>
<dbReference type="Pfam" id="PF03079">
    <property type="entry name" value="ARD"/>
    <property type="match status" value="1"/>
</dbReference>
<dbReference type="SUPFAM" id="SSF51182">
    <property type="entry name" value="RmlC-like cupins"/>
    <property type="match status" value="1"/>
</dbReference>
<proteinExistence type="inferred from homology"/>
<accession>Q66E17</accession>
<name>MTND_YERPS</name>
<gene>
    <name evidence="1" type="primary">mtnD</name>
    <name type="ordered locus">YPTB0876</name>
</gene>
<feature type="chain" id="PRO_0000359261" description="Acireductone dioxygenase">
    <location>
        <begin position="1"/>
        <end position="180"/>
    </location>
</feature>
<feature type="binding site" evidence="1">
    <location>
        <position position="97"/>
    </location>
    <ligand>
        <name>Fe(2+)</name>
        <dbReference type="ChEBI" id="CHEBI:29033"/>
    </ligand>
</feature>
<feature type="binding site" evidence="1">
    <location>
        <position position="97"/>
    </location>
    <ligand>
        <name>Ni(2+)</name>
        <dbReference type="ChEBI" id="CHEBI:49786"/>
    </ligand>
</feature>
<feature type="binding site" evidence="1">
    <location>
        <position position="99"/>
    </location>
    <ligand>
        <name>Fe(2+)</name>
        <dbReference type="ChEBI" id="CHEBI:29033"/>
    </ligand>
</feature>
<feature type="binding site" evidence="1">
    <location>
        <position position="99"/>
    </location>
    <ligand>
        <name>Ni(2+)</name>
        <dbReference type="ChEBI" id="CHEBI:49786"/>
    </ligand>
</feature>
<feature type="binding site" evidence="1">
    <location>
        <position position="103"/>
    </location>
    <ligand>
        <name>Fe(2+)</name>
        <dbReference type="ChEBI" id="CHEBI:29033"/>
    </ligand>
</feature>
<feature type="binding site" evidence="1">
    <location>
        <position position="103"/>
    </location>
    <ligand>
        <name>Ni(2+)</name>
        <dbReference type="ChEBI" id="CHEBI:49786"/>
    </ligand>
</feature>
<feature type="binding site" evidence="1">
    <location>
        <position position="141"/>
    </location>
    <ligand>
        <name>Fe(2+)</name>
        <dbReference type="ChEBI" id="CHEBI:29033"/>
    </ligand>
</feature>
<feature type="binding site" evidence="1">
    <location>
        <position position="141"/>
    </location>
    <ligand>
        <name>Ni(2+)</name>
        <dbReference type="ChEBI" id="CHEBI:49786"/>
    </ligand>
</feature>
<feature type="site" description="May play a role in metal incorporation in vivo" evidence="1">
    <location>
        <position position="96"/>
    </location>
</feature>
<feature type="site" description="May play a role in transmitting local conformational changes" evidence="1">
    <location>
        <position position="102"/>
    </location>
</feature>
<feature type="site" description="Important to generate the dianion" evidence="1">
    <location>
        <position position="105"/>
    </location>
</feature>
<comment type="function">
    <text evidence="1">Catalyzes 2 different reactions between oxygen and the acireductone 1,2-dihydroxy-3-keto-5-methylthiopentene (DHK-MTPene) depending upon the metal bound in the active site. Fe-containing acireductone dioxygenase (Fe-ARD) produces formate and 2-keto-4-methylthiobutyrate (KMTB), the alpha-ketoacid precursor of methionine in the methionine recycle pathway. Ni-containing acireductone dioxygenase (Ni-ARD) produces methylthiopropionate, carbon monoxide and formate, and does not lie on the methionine recycle pathway.</text>
</comment>
<comment type="catalytic activity">
    <reaction evidence="1">
        <text>1,2-dihydroxy-5-(methylsulfanyl)pent-1-en-3-one + O2 = 3-(methylsulfanyl)propanoate + CO + formate + 2 H(+)</text>
        <dbReference type="Rhea" id="RHEA:14161"/>
        <dbReference type="ChEBI" id="CHEBI:15378"/>
        <dbReference type="ChEBI" id="CHEBI:15379"/>
        <dbReference type="ChEBI" id="CHEBI:15740"/>
        <dbReference type="ChEBI" id="CHEBI:17245"/>
        <dbReference type="ChEBI" id="CHEBI:49016"/>
        <dbReference type="ChEBI" id="CHEBI:49252"/>
        <dbReference type="EC" id="1.13.11.53"/>
    </reaction>
</comment>
<comment type="catalytic activity">
    <reaction evidence="1">
        <text>1,2-dihydroxy-5-(methylsulfanyl)pent-1-en-3-one + O2 = 4-methylsulfanyl-2-oxobutanoate + formate + 2 H(+)</text>
        <dbReference type="Rhea" id="RHEA:24504"/>
        <dbReference type="ChEBI" id="CHEBI:15378"/>
        <dbReference type="ChEBI" id="CHEBI:15379"/>
        <dbReference type="ChEBI" id="CHEBI:15740"/>
        <dbReference type="ChEBI" id="CHEBI:16723"/>
        <dbReference type="ChEBI" id="CHEBI:49252"/>
        <dbReference type="EC" id="1.13.11.54"/>
    </reaction>
</comment>
<comment type="cofactor">
    <cofactor evidence="1">
        <name>Fe(2+)</name>
        <dbReference type="ChEBI" id="CHEBI:29033"/>
    </cofactor>
    <text evidence="1">Binds 1 Fe(2+) cation per monomer.</text>
</comment>
<comment type="cofactor">
    <cofactor evidence="1">
        <name>Ni(2+)</name>
        <dbReference type="ChEBI" id="CHEBI:49786"/>
    </cofactor>
    <text evidence="1">Binds 1 nickel ion per monomer.</text>
</comment>
<comment type="pathway">
    <text evidence="1">Amino-acid biosynthesis; L-methionine biosynthesis via salvage pathway; L-methionine from S-methyl-5-thio-alpha-D-ribose 1-phosphate: step 5/6.</text>
</comment>
<comment type="subunit">
    <text evidence="1">Monomer.</text>
</comment>
<comment type="similarity">
    <text evidence="1">Belongs to the acireductone dioxygenase (ARD) family.</text>
</comment>
<keyword id="KW-0028">Amino-acid biosynthesis</keyword>
<keyword id="KW-0223">Dioxygenase</keyword>
<keyword id="KW-0408">Iron</keyword>
<keyword id="KW-0479">Metal-binding</keyword>
<keyword id="KW-0486">Methionine biosynthesis</keyword>
<keyword id="KW-0533">Nickel</keyword>
<keyword id="KW-0560">Oxidoreductase</keyword>